<keyword id="KW-0227">DNA damage</keyword>
<keyword id="KW-0234">DNA repair</keyword>
<keyword id="KW-1185">Reference proteome</keyword>
<accession>B1YMD8</accession>
<protein>
    <recommendedName>
        <fullName evidence="1">DNA mismatch repair protein MutL</fullName>
    </recommendedName>
</protein>
<organism>
    <name type="scientific">Exiguobacterium sibiricum (strain DSM 17290 / CCUG 55495 / CIP 109462 / JCM 13490 / 255-15)</name>
    <dbReference type="NCBI Taxonomy" id="262543"/>
    <lineage>
        <taxon>Bacteria</taxon>
        <taxon>Bacillati</taxon>
        <taxon>Bacillota</taxon>
        <taxon>Bacilli</taxon>
        <taxon>Bacillales</taxon>
        <taxon>Bacillales Family XII. Incertae Sedis</taxon>
        <taxon>Exiguobacterium</taxon>
    </lineage>
</organism>
<proteinExistence type="inferred from homology"/>
<evidence type="ECO:0000255" key="1">
    <source>
        <dbReference type="HAMAP-Rule" id="MF_00149"/>
    </source>
</evidence>
<evidence type="ECO:0000256" key="2">
    <source>
        <dbReference type="SAM" id="MobiDB-lite"/>
    </source>
</evidence>
<comment type="function">
    <text evidence="1">This protein is involved in the repair of mismatches in DNA. It is required for dam-dependent methyl-directed DNA mismatch repair. May act as a 'molecular matchmaker', a protein that promotes the formation of a stable complex between two or more DNA-binding proteins in an ATP-dependent manner without itself being part of a final effector complex.</text>
</comment>
<comment type="similarity">
    <text evidence="1">Belongs to the DNA mismatch repair MutL/HexB family.</text>
</comment>
<sequence length="607" mass="68340">MGIIRELSDSLANRIAAGEVVERPASVVKELVENALDAGATQVDVELEEAGMKRITIRDNGHGFYPEDAELAFVRHATSKIKDEHDLFRIKTLGFRGEALASIASVSKVTLKTKREEQEGIQLTLDCGRLTDRSAIAMNRGTELTVEQLFFNTPARLKYLKTTHTELAAITDILNRVAFAHPDVKLYAVHEGKVLIQTNGSGDVRQALASVYGHQTIQGTLVATGTTADYQLTCHLVKPEVTRASKNYITLILNGRSVKNFALTQAVLNGYHTLLPIGRFPIAVIEVTMDPLLIDVNVHPAKREVRLSKEAELCQLIQETIRLTLSRQTLIPKVTPQKPKKDPSAQEKLEFSYVAEPVEELSSRSVWNYPIPKRTEAGNEHVPSANRIQPPDPSIDMPDEPVPEQTDEPVATGPKFPHLDVIGQLHSSYIVCSGADGMYLIDQHAAQERIKYETYKVMFGRPLEQKQQLLLPYTFEIASDDMRRMDEVLPLLRDVGIELEAFGPQSFIVREVPTWFPSHRQEETIQELMDEALMKRKVDLETYREDAAIMMACKKSIKANHPLNHEMMRQLIVDLAKTEMPFTCPHGRPVIIEWTTYELEKLFKRVT</sequence>
<feature type="chain" id="PRO_1000096653" description="DNA mismatch repair protein MutL">
    <location>
        <begin position="1"/>
        <end position="607"/>
    </location>
</feature>
<feature type="region of interest" description="Disordered" evidence="2">
    <location>
        <begin position="374"/>
        <end position="411"/>
    </location>
</feature>
<feature type="compositionally biased region" description="Acidic residues" evidence="2">
    <location>
        <begin position="397"/>
        <end position="407"/>
    </location>
</feature>
<gene>
    <name evidence="1" type="primary">mutL</name>
    <name type="ordered locus">Exig_1045</name>
</gene>
<name>MUTL_EXIS2</name>
<dbReference type="EMBL" id="CP001022">
    <property type="protein sequence ID" value="ACB60525.1"/>
    <property type="molecule type" value="Genomic_DNA"/>
</dbReference>
<dbReference type="RefSeq" id="WP_012369948.1">
    <property type="nucleotide sequence ID" value="NC_010556.1"/>
</dbReference>
<dbReference type="SMR" id="B1YMD8"/>
<dbReference type="STRING" id="262543.Exig_1045"/>
<dbReference type="KEGG" id="esi:Exig_1045"/>
<dbReference type="eggNOG" id="COG0323">
    <property type="taxonomic scope" value="Bacteria"/>
</dbReference>
<dbReference type="HOGENOM" id="CLU_004131_4_2_9"/>
<dbReference type="OrthoDB" id="9763467at2"/>
<dbReference type="Proteomes" id="UP000001681">
    <property type="component" value="Chromosome"/>
</dbReference>
<dbReference type="GO" id="GO:0032300">
    <property type="term" value="C:mismatch repair complex"/>
    <property type="evidence" value="ECO:0007669"/>
    <property type="project" value="InterPro"/>
</dbReference>
<dbReference type="GO" id="GO:0005524">
    <property type="term" value="F:ATP binding"/>
    <property type="evidence" value="ECO:0007669"/>
    <property type="project" value="InterPro"/>
</dbReference>
<dbReference type="GO" id="GO:0016887">
    <property type="term" value="F:ATP hydrolysis activity"/>
    <property type="evidence" value="ECO:0007669"/>
    <property type="project" value="InterPro"/>
</dbReference>
<dbReference type="GO" id="GO:0140664">
    <property type="term" value="F:ATP-dependent DNA damage sensor activity"/>
    <property type="evidence" value="ECO:0007669"/>
    <property type="project" value="InterPro"/>
</dbReference>
<dbReference type="GO" id="GO:0030983">
    <property type="term" value="F:mismatched DNA binding"/>
    <property type="evidence" value="ECO:0007669"/>
    <property type="project" value="InterPro"/>
</dbReference>
<dbReference type="GO" id="GO:0006298">
    <property type="term" value="P:mismatch repair"/>
    <property type="evidence" value="ECO:0007669"/>
    <property type="project" value="UniProtKB-UniRule"/>
</dbReference>
<dbReference type="CDD" id="cd16926">
    <property type="entry name" value="HATPase_MutL-MLH-PMS-like"/>
    <property type="match status" value="1"/>
</dbReference>
<dbReference type="CDD" id="cd00782">
    <property type="entry name" value="MutL_Trans"/>
    <property type="match status" value="1"/>
</dbReference>
<dbReference type="FunFam" id="3.30.565.10:FF:000003">
    <property type="entry name" value="DNA mismatch repair endonuclease MutL"/>
    <property type="match status" value="1"/>
</dbReference>
<dbReference type="Gene3D" id="3.30.230.10">
    <property type="match status" value="1"/>
</dbReference>
<dbReference type="Gene3D" id="3.30.565.10">
    <property type="entry name" value="Histidine kinase-like ATPase, C-terminal domain"/>
    <property type="match status" value="1"/>
</dbReference>
<dbReference type="Gene3D" id="3.30.1540.20">
    <property type="entry name" value="MutL, C-terminal domain, dimerisation subdomain"/>
    <property type="match status" value="1"/>
</dbReference>
<dbReference type="Gene3D" id="3.30.1370.100">
    <property type="entry name" value="MutL, C-terminal domain, regulatory subdomain"/>
    <property type="match status" value="1"/>
</dbReference>
<dbReference type="HAMAP" id="MF_00149">
    <property type="entry name" value="DNA_mis_repair"/>
    <property type="match status" value="1"/>
</dbReference>
<dbReference type="InterPro" id="IPR014762">
    <property type="entry name" value="DNA_mismatch_repair_CS"/>
</dbReference>
<dbReference type="InterPro" id="IPR020667">
    <property type="entry name" value="DNA_mismatch_repair_MutL"/>
</dbReference>
<dbReference type="InterPro" id="IPR013507">
    <property type="entry name" value="DNA_mismatch_S5_2-like"/>
</dbReference>
<dbReference type="InterPro" id="IPR036890">
    <property type="entry name" value="HATPase_C_sf"/>
</dbReference>
<dbReference type="InterPro" id="IPR002099">
    <property type="entry name" value="MutL/Mlh/PMS"/>
</dbReference>
<dbReference type="InterPro" id="IPR038973">
    <property type="entry name" value="MutL/Mlh/Pms-like"/>
</dbReference>
<dbReference type="InterPro" id="IPR014790">
    <property type="entry name" value="MutL_C"/>
</dbReference>
<dbReference type="InterPro" id="IPR042120">
    <property type="entry name" value="MutL_C_dimsub"/>
</dbReference>
<dbReference type="InterPro" id="IPR042121">
    <property type="entry name" value="MutL_C_regsub"/>
</dbReference>
<dbReference type="InterPro" id="IPR037198">
    <property type="entry name" value="MutL_C_sf"/>
</dbReference>
<dbReference type="InterPro" id="IPR020568">
    <property type="entry name" value="Ribosomal_Su5_D2-typ_SF"/>
</dbReference>
<dbReference type="InterPro" id="IPR014721">
    <property type="entry name" value="Ribsml_uS5_D2-typ_fold_subgr"/>
</dbReference>
<dbReference type="NCBIfam" id="TIGR00585">
    <property type="entry name" value="mutl"/>
    <property type="match status" value="1"/>
</dbReference>
<dbReference type="PANTHER" id="PTHR10073">
    <property type="entry name" value="DNA MISMATCH REPAIR PROTEIN MLH, PMS, MUTL"/>
    <property type="match status" value="1"/>
</dbReference>
<dbReference type="PANTHER" id="PTHR10073:SF12">
    <property type="entry name" value="DNA MISMATCH REPAIR PROTEIN MLH1"/>
    <property type="match status" value="1"/>
</dbReference>
<dbReference type="Pfam" id="PF01119">
    <property type="entry name" value="DNA_mis_repair"/>
    <property type="match status" value="1"/>
</dbReference>
<dbReference type="Pfam" id="PF13589">
    <property type="entry name" value="HATPase_c_3"/>
    <property type="match status" value="1"/>
</dbReference>
<dbReference type="Pfam" id="PF08676">
    <property type="entry name" value="MutL_C"/>
    <property type="match status" value="1"/>
</dbReference>
<dbReference type="SMART" id="SM01340">
    <property type="entry name" value="DNA_mis_repair"/>
    <property type="match status" value="1"/>
</dbReference>
<dbReference type="SMART" id="SM00853">
    <property type="entry name" value="MutL_C"/>
    <property type="match status" value="1"/>
</dbReference>
<dbReference type="SUPFAM" id="SSF55874">
    <property type="entry name" value="ATPase domain of HSP90 chaperone/DNA topoisomerase II/histidine kinase"/>
    <property type="match status" value="1"/>
</dbReference>
<dbReference type="SUPFAM" id="SSF118116">
    <property type="entry name" value="DNA mismatch repair protein MutL"/>
    <property type="match status" value="1"/>
</dbReference>
<dbReference type="SUPFAM" id="SSF54211">
    <property type="entry name" value="Ribosomal protein S5 domain 2-like"/>
    <property type="match status" value="1"/>
</dbReference>
<dbReference type="PROSITE" id="PS00058">
    <property type="entry name" value="DNA_MISMATCH_REPAIR_1"/>
    <property type="match status" value="1"/>
</dbReference>
<reference key="1">
    <citation type="submission" date="2008-04" db="EMBL/GenBank/DDBJ databases">
        <title>Complete sequence of chromosome of Exiguobacterium sibiricum 255-15.</title>
        <authorList>
            <consortium name="US DOE Joint Genome Institute"/>
            <person name="Copeland A."/>
            <person name="Lucas S."/>
            <person name="Lapidus A."/>
            <person name="Glavina del Rio T."/>
            <person name="Dalin E."/>
            <person name="Tice H."/>
            <person name="Bruce D."/>
            <person name="Goodwin L."/>
            <person name="Pitluck S."/>
            <person name="Kiss H."/>
            <person name="Chertkov O."/>
            <person name="Monk C."/>
            <person name="Brettin T."/>
            <person name="Detter J.C."/>
            <person name="Han C."/>
            <person name="Kuske C.R."/>
            <person name="Schmutz J."/>
            <person name="Larimer F."/>
            <person name="Land M."/>
            <person name="Hauser L."/>
            <person name="Kyrpides N."/>
            <person name="Mikhailova N."/>
            <person name="Vishnivetskaya T."/>
            <person name="Rodrigues D.F."/>
            <person name="Gilichinsky D."/>
            <person name="Tiedje J."/>
            <person name="Richardson P."/>
        </authorList>
    </citation>
    <scope>NUCLEOTIDE SEQUENCE [LARGE SCALE GENOMIC DNA]</scope>
    <source>
        <strain>DSM 17290 / CCUG 55495 / CIP 109462 / JCM 13490 / 255-15</strain>
    </source>
</reference>